<accession>A2BIR6</accession>
<name>YDJC_DANRE</name>
<proteinExistence type="inferred from homology"/>
<gene>
    <name type="primary">ydjc</name>
    <name type="ORF">si:ch211-89f7.6</name>
</gene>
<organism>
    <name type="scientific">Danio rerio</name>
    <name type="common">Zebrafish</name>
    <name type="synonym">Brachydanio rerio</name>
    <dbReference type="NCBI Taxonomy" id="7955"/>
    <lineage>
        <taxon>Eukaryota</taxon>
        <taxon>Metazoa</taxon>
        <taxon>Chordata</taxon>
        <taxon>Craniata</taxon>
        <taxon>Vertebrata</taxon>
        <taxon>Euteleostomi</taxon>
        <taxon>Actinopterygii</taxon>
        <taxon>Neopterygii</taxon>
        <taxon>Teleostei</taxon>
        <taxon>Ostariophysi</taxon>
        <taxon>Cypriniformes</taxon>
        <taxon>Danionidae</taxon>
        <taxon>Danioninae</taxon>
        <taxon>Danio</taxon>
    </lineage>
</organism>
<sequence>MPQPKVKLVVTGDDFGYCERRNQGIVDCFRAGGISNVSLLVNAVSAKHAADLAKRYHMPIGLHANLSEGLPVSQELKGSTLLNKDGFFHGKMGFREVLHSGQLKMSEVEAELRAQVNRFFELIGHMPYHMDGHQHVHVLPDVREVFAQVLSDFGITYTRVPIEPGLRFCNFLPSHLREFNAQVEKDALESVEVFHRNGIRWPDVYLGLSTMGKNMCLSNLKRALEASLDDGVSSPLILTQSNNAASNCYRPVTAELMVHPGYPSQPQQGGCGEGPDDFSQSTDRLHELNTLRDPMVLNFYRQQGIHLCAFKDF</sequence>
<reference key="1">
    <citation type="journal article" date="2013" name="Nature">
        <title>The zebrafish reference genome sequence and its relationship to the human genome.</title>
        <authorList>
            <person name="Howe K."/>
            <person name="Clark M.D."/>
            <person name="Torroja C.F."/>
            <person name="Torrance J."/>
            <person name="Berthelot C."/>
            <person name="Muffato M."/>
            <person name="Collins J.E."/>
            <person name="Humphray S."/>
            <person name="McLaren K."/>
            <person name="Matthews L."/>
            <person name="McLaren S."/>
            <person name="Sealy I."/>
            <person name="Caccamo M."/>
            <person name="Churcher C."/>
            <person name="Scott C."/>
            <person name="Barrett J.C."/>
            <person name="Koch R."/>
            <person name="Rauch G.J."/>
            <person name="White S."/>
            <person name="Chow W."/>
            <person name="Kilian B."/>
            <person name="Quintais L.T."/>
            <person name="Guerra-Assuncao J.A."/>
            <person name="Zhou Y."/>
            <person name="Gu Y."/>
            <person name="Yen J."/>
            <person name="Vogel J.H."/>
            <person name="Eyre T."/>
            <person name="Redmond S."/>
            <person name="Banerjee R."/>
            <person name="Chi J."/>
            <person name="Fu B."/>
            <person name="Langley E."/>
            <person name="Maguire S.F."/>
            <person name="Laird G.K."/>
            <person name="Lloyd D."/>
            <person name="Kenyon E."/>
            <person name="Donaldson S."/>
            <person name="Sehra H."/>
            <person name="Almeida-King J."/>
            <person name="Loveland J."/>
            <person name="Trevanion S."/>
            <person name="Jones M."/>
            <person name="Quail M."/>
            <person name="Willey D."/>
            <person name="Hunt A."/>
            <person name="Burton J."/>
            <person name="Sims S."/>
            <person name="McLay K."/>
            <person name="Plumb B."/>
            <person name="Davis J."/>
            <person name="Clee C."/>
            <person name="Oliver K."/>
            <person name="Clark R."/>
            <person name="Riddle C."/>
            <person name="Elliot D."/>
            <person name="Threadgold G."/>
            <person name="Harden G."/>
            <person name="Ware D."/>
            <person name="Begum S."/>
            <person name="Mortimore B."/>
            <person name="Kerry G."/>
            <person name="Heath P."/>
            <person name="Phillimore B."/>
            <person name="Tracey A."/>
            <person name="Corby N."/>
            <person name="Dunn M."/>
            <person name="Johnson C."/>
            <person name="Wood J."/>
            <person name="Clark S."/>
            <person name="Pelan S."/>
            <person name="Griffiths G."/>
            <person name="Smith M."/>
            <person name="Glithero R."/>
            <person name="Howden P."/>
            <person name="Barker N."/>
            <person name="Lloyd C."/>
            <person name="Stevens C."/>
            <person name="Harley J."/>
            <person name="Holt K."/>
            <person name="Panagiotidis G."/>
            <person name="Lovell J."/>
            <person name="Beasley H."/>
            <person name="Henderson C."/>
            <person name="Gordon D."/>
            <person name="Auger K."/>
            <person name="Wright D."/>
            <person name="Collins J."/>
            <person name="Raisen C."/>
            <person name="Dyer L."/>
            <person name="Leung K."/>
            <person name="Robertson L."/>
            <person name="Ambridge K."/>
            <person name="Leongamornlert D."/>
            <person name="McGuire S."/>
            <person name="Gilderthorp R."/>
            <person name="Griffiths C."/>
            <person name="Manthravadi D."/>
            <person name="Nichol S."/>
            <person name="Barker G."/>
            <person name="Whitehead S."/>
            <person name="Kay M."/>
            <person name="Brown J."/>
            <person name="Murnane C."/>
            <person name="Gray E."/>
            <person name="Humphries M."/>
            <person name="Sycamore N."/>
            <person name="Barker D."/>
            <person name="Saunders D."/>
            <person name="Wallis J."/>
            <person name="Babbage A."/>
            <person name="Hammond S."/>
            <person name="Mashreghi-Mohammadi M."/>
            <person name="Barr L."/>
            <person name="Martin S."/>
            <person name="Wray P."/>
            <person name="Ellington A."/>
            <person name="Matthews N."/>
            <person name="Ellwood M."/>
            <person name="Woodmansey R."/>
            <person name="Clark G."/>
            <person name="Cooper J."/>
            <person name="Tromans A."/>
            <person name="Grafham D."/>
            <person name="Skuce C."/>
            <person name="Pandian R."/>
            <person name="Andrews R."/>
            <person name="Harrison E."/>
            <person name="Kimberley A."/>
            <person name="Garnett J."/>
            <person name="Fosker N."/>
            <person name="Hall R."/>
            <person name="Garner P."/>
            <person name="Kelly D."/>
            <person name="Bird C."/>
            <person name="Palmer S."/>
            <person name="Gehring I."/>
            <person name="Berger A."/>
            <person name="Dooley C.M."/>
            <person name="Ersan-Urun Z."/>
            <person name="Eser C."/>
            <person name="Geiger H."/>
            <person name="Geisler M."/>
            <person name="Karotki L."/>
            <person name="Kirn A."/>
            <person name="Konantz J."/>
            <person name="Konantz M."/>
            <person name="Oberlander M."/>
            <person name="Rudolph-Geiger S."/>
            <person name="Teucke M."/>
            <person name="Lanz C."/>
            <person name="Raddatz G."/>
            <person name="Osoegawa K."/>
            <person name="Zhu B."/>
            <person name="Rapp A."/>
            <person name="Widaa S."/>
            <person name="Langford C."/>
            <person name="Yang F."/>
            <person name="Schuster S.C."/>
            <person name="Carter N.P."/>
            <person name="Harrow J."/>
            <person name="Ning Z."/>
            <person name="Herrero J."/>
            <person name="Searle S.M."/>
            <person name="Enright A."/>
            <person name="Geisler R."/>
            <person name="Plasterk R.H."/>
            <person name="Lee C."/>
            <person name="Westerfield M."/>
            <person name="de Jong P.J."/>
            <person name="Zon L.I."/>
            <person name="Postlethwait J.H."/>
            <person name="Nusslein-Volhard C."/>
            <person name="Hubbard T.J."/>
            <person name="Roest Crollius H."/>
            <person name="Rogers J."/>
            <person name="Stemple D.L."/>
        </authorList>
    </citation>
    <scope>NUCLEOTIDE SEQUENCE [LARGE SCALE GENOMIC DNA]</scope>
    <source>
        <strain>Tuebingen</strain>
    </source>
</reference>
<keyword id="KW-0119">Carbohydrate metabolism</keyword>
<keyword id="KW-0378">Hydrolase</keyword>
<keyword id="KW-0460">Magnesium</keyword>
<keyword id="KW-0479">Metal-binding</keyword>
<keyword id="KW-1185">Reference proteome</keyword>
<protein>
    <recommendedName>
        <fullName evidence="1">Carbohydrate deacetylase</fullName>
        <ecNumber evidence="1">3.5.1.-</ecNumber>
    </recommendedName>
</protein>
<feature type="chain" id="PRO_0000328776" description="Carbohydrate deacetylase">
    <location>
        <begin position="1"/>
        <end position="313"/>
    </location>
</feature>
<feature type="region of interest" description="Disordered" evidence="2">
    <location>
        <begin position="262"/>
        <end position="281"/>
    </location>
</feature>
<feature type="active site" description="Proton acceptor" evidence="1">
    <location>
        <position position="13"/>
    </location>
</feature>
<feature type="binding site" evidence="1">
    <location>
        <position position="14"/>
    </location>
    <ligand>
        <name>Mg(2+)</name>
        <dbReference type="ChEBI" id="CHEBI:18420"/>
    </ligand>
</feature>
<feature type="binding site" evidence="1">
    <location>
        <position position="133"/>
    </location>
    <ligand>
        <name>Mg(2+)</name>
        <dbReference type="ChEBI" id="CHEBI:18420"/>
    </ligand>
</feature>
<evidence type="ECO:0000250" key="1">
    <source>
        <dbReference type="UniProtKB" id="Q53WD3"/>
    </source>
</evidence>
<evidence type="ECO:0000256" key="2">
    <source>
        <dbReference type="SAM" id="MobiDB-lite"/>
    </source>
</evidence>
<evidence type="ECO:0000305" key="3"/>
<comment type="function">
    <text evidence="1">Probably catalyzes the deacetylation of acetylated carbohydrates an important step in the degradation of oligosaccharides.</text>
</comment>
<comment type="cofactor">
    <cofactor evidence="1">
        <name>Mg(2+)</name>
        <dbReference type="ChEBI" id="CHEBI:18420"/>
    </cofactor>
</comment>
<comment type="similarity">
    <text evidence="3">Belongs to the YdjC deacetylase family.</text>
</comment>
<dbReference type="EC" id="3.5.1.-" evidence="1"/>
<dbReference type="EMBL" id="BX957246">
    <property type="protein sequence ID" value="CAM14368.1"/>
    <property type="molecule type" value="Genomic_DNA"/>
</dbReference>
<dbReference type="RefSeq" id="NP_001076331.1">
    <property type="nucleotide sequence ID" value="NM_001082862.1"/>
</dbReference>
<dbReference type="RefSeq" id="XP_005165107.1">
    <property type="nucleotide sequence ID" value="XM_005165050.5"/>
</dbReference>
<dbReference type="RefSeq" id="XP_017211642.1">
    <property type="nucleotide sequence ID" value="XM_017356153.1"/>
</dbReference>
<dbReference type="RefSeq" id="XP_068077393.1">
    <property type="nucleotide sequence ID" value="XM_068221292.1"/>
</dbReference>
<dbReference type="SMR" id="A2BIR6"/>
<dbReference type="FunCoup" id="A2BIR6">
    <property type="interactions" value="198"/>
</dbReference>
<dbReference type="STRING" id="7955.ENSDARP00000085284"/>
<dbReference type="PaxDb" id="7955-ENSDARP00000085284"/>
<dbReference type="Ensembl" id="ENSDART00000090851">
    <property type="protein sequence ID" value="ENSDARP00000085284"/>
    <property type="gene ID" value="ENSDARG00000062655"/>
</dbReference>
<dbReference type="Ensembl" id="ENSDART00000182189">
    <property type="protein sequence ID" value="ENSDARP00000153022"/>
    <property type="gene ID" value="ENSDARG00000062655"/>
</dbReference>
<dbReference type="GeneID" id="569036"/>
<dbReference type="KEGG" id="dre:569036"/>
<dbReference type="AGR" id="ZFIN:ZDB-GENE-060526-182"/>
<dbReference type="CTD" id="150223"/>
<dbReference type="ZFIN" id="ZDB-GENE-060526-182">
    <property type="gene designation" value="ydjc"/>
</dbReference>
<dbReference type="eggNOG" id="ENOG502RYFJ">
    <property type="taxonomic scope" value="Eukaryota"/>
</dbReference>
<dbReference type="HOGENOM" id="CLU_064244_1_0_1"/>
<dbReference type="InParanoid" id="A2BIR6"/>
<dbReference type="OMA" id="GLHNCDW"/>
<dbReference type="OrthoDB" id="8908051at2759"/>
<dbReference type="PhylomeDB" id="A2BIR6"/>
<dbReference type="TreeFam" id="TF329340"/>
<dbReference type="PRO" id="PR:A2BIR6"/>
<dbReference type="Proteomes" id="UP000000437">
    <property type="component" value="Chromosome 5"/>
</dbReference>
<dbReference type="Bgee" id="ENSDARG00000062655">
    <property type="expression patterns" value="Expressed in blastula and 21 other cell types or tissues"/>
</dbReference>
<dbReference type="GO" id="GO:0019213">
    <property type="term" value="F:deacetylase activity"/>
    <property type="evidence" value="ECO:0000318"/>
    <property type="project" value="GO_Central"/>
</dbReference>
<dbReference type="GO" id="GO:0016787">
    <property type="term" value="F:hydrolase activity"/>
    <property type="evidence" value="ECO:0007669"/>
    <property type="project" value="UniProtKB-KW"/>
</dbReference>
<dbReference type="GO" id="GO:0000287">
    <property type="term" value="F:magnesium ion binding"/>
    <property type="evidence" value="ECO:0000250"/>
    <property type="project" value="UniProtKB"/>
</dbReference>
<dbReference type="GO" id="GO:0005975">
    <property type="term" value="P:carbohydrate metabolic process"/>
    <property type="evidence" value="ECO:0007669"/>
    <property type="project" value="InterPro"/>
</dbReference>
<dbReference type="CDD" id="cd10806">
    <property type="entry name" value="YdjC_like_2"/>
    <property type="match status" value="1"/>
</dbReference>
<dbReference type="FunFam" id="3.20.20.370:FF:000006">
    <property type="entry name" value="YdjC chitooligosaccharide deacetylase homolog"/>
    <property type="match status" value="1"/>
</dbReference>
<dbReference type="Gene3D" id="3.20.20.370">
    <property type="entry name" value="Glycoside hydrolase/deacetylase"/>
    <property type="match status" value="1"/>
</dbReference>
<dbReference type="InterPro" id="IPR011330">
    <property type="entry name" value="Glyco_hydro/deAcase_b/a-brl"/>
</dbReference>
<dbReference type="InterPro" id="IPR006879">
    <property type="entry name" value="YdjC-like"/>
</dbReference>
<dbReference type="PANTHER" id="PTHR31609:SF1">
    <property type="entry name" value="CARBOHYDRATE DEACETYLASE"/>
    <property type="match status" value="1"/>
</dbReference>
<dbReference type="PANTHER" id="PTHR31609">
    <property type="entry name" value="YDJC DEACETYLASE FAMILY MEMBER"/>
    <property type="match status" value="1"/>
</dbReference>
<dbReference type="Pfam" id="PF04794">
    <property type="entry name" value="YdjC"/>
    <property type="match status" value="1"/>
</dbReference>
<dbReference type="SUPFAM" id="SSF88713">
    <property type="entry name" value="Glycoside hydrolase/deacetylase"/>
    <property type="match status" value="1"/>
</dbReference>